<sequence>MADLEAVLADVSYLMAMEKSKATPAARASKKILLPEPSIRSVMQKYLEDRGEVTFEKIFSQKLGYLLFRDFYLNHLEEAKPLVEFYEEIEKYEKLETEEERVVRSREIFDSYIMKELLACSHPFSKNATEHVQGHLVKKQVPPDLFQPYIEEICQNLRGDVFHKFIESDKFTRFCQWKNVELNIHLTMNDFSVHRIIGRGGFGEVYGCRKADTGKMYAMKCLDKKRIKMKQGETLALNERIMLSLVSTGDCPFIVCMSYAFHTPDKLSFILDLMNGGDLHYHLSQHGVFSEADMRFYAAEIILGLEHMHNRFVVYRDLKPANILLDEHGHVRISDLGLACDFSKKKPHASVGTHGYMAPEVLQKGVAYDSSADWFSLGCMLFKLLRGHSPFRQHKTKDKHEIDRMTLTMAVELPDSFSPELRSLLEGLLQRDVNRRLGCLGRGAQEIKESPFFRSLDWQMVFLQKYPPPLIPPRGEVNAADAFDIGSFDEEDTKGIKLLDSDQELYRNFPLTISERWQQEVAETVFDTINAETDRLEARKKAKNKQLGHEEDYALGKDCIMHGYMSKMGNPFLTQWQRRYFYLFPNRLEWRGEDEAPQSLLTMEEIQSVEETQIKERKCLLLKIRGGKQFVLQCDSDPELVQWKKELRDAYREAQQLVQRVPKMKNKPRSPVVELSKVPLIQRGSANGL</sequence>
<dbReference type="EC" id="2.7.11.15" evidence="9"/>
<dbReference type="EMBL" id="M87854">
    <property type="protein sequence ID" value="AAA40802.1"/>
    <property type="molecule type" value="mRNA"/>
</dbReference>
<dbReference type="EMBL" id="S48813">
    <property type="protein sequence ID" value="AAB24228.1"/>
    <property type="molecule type" value="mRNA"/>
</dbReference>
<dbReference type="PIR" id="I56531">
    <property type="entry name" value="I56531"/>
</dbReference>
<dbReference type="RefSeq" id="NP_036908.1">
    <property type="nucleotide sequence ID" value="NM_012776.1"/>
</dbReference>
<dbReference type="SMR" id="P26817"/>
<dbReference type="BioGRID" id="247278">
    <property type="interactions" value="3"/>
</dbReference>
<dbReference type="FunCoup" id="P26817">
    <property type="interactions" value="2762"/>
</dbReference>
<dbReference type="STRING" id="10116.ENSRNOP00000025847"/>
<dbReference type="ChEMBL" id="CHEMBL4105719"/>
<dbReference type="iPTMnet" id="P26817"/>
<dbReference type="PhosphoSitePlus" id="P26817"/>
<dbReference type="SwissPalm" id="P26817"/>
<dbReference type="jPOST" id="P26817"/>
<dbReference type="PaxDb" id="10116-ENSRNOP00000025847"/>
<dbReference type="GeneID" id="25238"/>
<dbReference type="KEGG" id="rno:25238"/>
<dbReference type="UCSC" id="RGD:2062">
    <property type="organism name" value="rat"/>
</dbReference>
<dbReference type="AGR" id="RGD:2062"/>
<dbReference type="CTD" id="156"/>
<dbReference type="RGD" id="2062">
    <property type="gene designation" value="Grk2"/>
</dbReference>
<dbReference type="eggNOG" id="KOG0986">
    <property type="taxonomic scope" value="Eukaryota"/>
</dbReference>
<dbReference type="InParanoid" id="P26817"/>
<dbReference type="PhylomeDB" id="P26817"/>
<dbReference type="BRENDA" id="2.7.11.15">
    <property type="organism ID" value="5301"/>
</dbReference>
<dbReference type="Reactome" id="R-RNO-111933">
    <property type="pathway name" value="Calmodulin induced events"/>
</dbReference>
<dbReference type="Reactome" id="R-RNO-416476">
    <property type="pathway name" value="G alpha (q) signalling events"/>
</dbReference>
<dbReference type="Reactome" id="R-RNO-418555">
    <property type="pathway name" value="G alpha (s) signalling events"/>
</dbReference>
<dbReference type="Reactome" id="R-RNO-5635838">
    <property type="pathway name" value="Activation of SMO"/>
</dbReference>
<dbReference type="Reactome" id="R-RNO-8856825">
    <property type="pathway name" value="Cargo recognition for clathrin-mediated endocytosis"/>
</dbReference>
<dbReference type="PRO" id="PR:P26817"/>
<dbReference type="Proteomes" id="UP000002494">
    <property type="component" value="Unplaced"/>
</dbReference>
<dbReference type="GO" id="GO:0016324">
    <property type="term" value="C:apical plasma membrane"/>
    <property type="evidence" value="ECO:0000314"/>
    <property type="project" value="RGD"/>
</dbReference>
<dbReference type="GO" id="GO:0030424">
    <property type="term" value="C:axon"/>
    <property type="evidence" value="ECO:0000314"/>
    <property type="project" value="RGD"/>
</dbReference>
<dbReference type="GO" id="GO:0016323">
    <property type="term" value="C:basolateral plasma membrane"/>
    <property type="evidence" value="ECO:0000314"/>
    <property type="project" value="RGD"/>
</dbReference>
<dbReference type="GO" id="GO:0005901">
    <property type="term" value="C:caveola"/>
    <property type="evidence" value="ECO:0000314"/>
    <property type="project" value="RGD"/>
</dbReference>
<dbReference type="GO" id="GO:0005737">
    <property type="term" value="C:cytoplasm"/>
    <property type="evidence" value="ECO:0000266"/>
    <property type="project" value="RGD"/>
</dbReference>
<dbReference type="GO" id="GO:0032473">
    <property type="term" value="C:cytoplasmic side of mitochondrial outer membrane"/>
    <property type="evidence" value="ECO:0000266"/>
    <property type="project" value="RGD"/>
</dbReference>
<dbReference type="GO" id="GO:0005829">
    <property type="term" value="C:cytosol"/>
    <property type="evidence" value="ECO:0000266"/>
    <property type="project" value="RGD"/>
</dbReference>
<dbReference type="GO" id="GO:0043198">
    <property type="term" value="C:dendritic shaft"/>
    <property type="evidence" value="ECO:0000314"/>
    <property type="project" value="RGD"/>
</dbReference>
<dbReference type="GO" id="GO:0043197">
    <property type="term" value="C:dendritic spine"/>
    <property type="evidence" value="ECO:0000314"/>
    <property type="project" value="RGD"/>
</dbReference>
<dbReference type="GO" id="GO:0098978">
    <property type="term" value="C:glutamatergic synapse"/>
    <property type="evidence" value="ECO:0000314"/>
    <property type="project" value="SynGO"/>
</dbReference>
<dbReference type="GO" id="GO:0016020">
    <property type="term" value="C:membrane"/>
    <property type="evidence" value="ECO:0000266"/>
    <property type="project" value="RGD"/>
</dbReference>
<dbReference type="GO" id="GO:0005634">
    <property type="term" value="C:nucleus"/>
    <property type="evidence" value="ECO:0007669"/>
    <property type="project" value="GOC"/>
</dbReference>
<dbReference type="GO" id="GO:0014069">
    <property type="term" value="C:postsynaptic density"/>
    <property type="evidence" value="ECO:0000314"/>
    <property type="project" value="SynGO"/>
</dbReference>
<dbReference type="GO" id="GO:0098793">
    <property type="term" value="C:presynapse"/>
    <property type="evidence" value="ECO:0000314"/>
    <property type="project" value="SynGO"/>
</dbReference>
<dbReference type="GO" id="GO:0005524">
    <property type="term" value="F:ATP binding"/>
    <property type="evidence" value="ECO:0007669"/>
    <property type="project" value="UniProtKB-KW"/>
</dbReference>
<dbReference type="GO" id="GO:0047696">
    <property type="term" value="F:beta-adrenergic receptor kinase activity"/>
    <property type="evidence" value="ECO:0000314"/>
    <property type="project" value="RGD"/>
</dbReference>
<dbReference type="GO" id="GO:0031850">
    <property type="term" value="F:delta-type opioid receptor binding"/>
    <property type="evidence" value="ECO:0000353"/>
    <property type="project" value="RGD"/>
</dbReference>
<dbReference type="GO" id="GO:0031755">
    <property type="term" value="F:Edg-2 lysophosphatidic acid receptor binding"/>
    <property type="evidence" value="ECO:0000266"/>
    <property type="project" value="RGD"/>
</dbReference>
<dbReference type="GO" id="GO:0001664">
    <property type="term" value="F:G protein-coupled receptor binding"/>
    <property type="evidence" value="ECO:0000353"/>
    <property type="project" value="RGD"/>
</dbReference>
<dbReference type="GO" id="GO:0004703">
    <property type="term" value="F:G protein-coupled receptor kinase activity"/>
    <property type="evidence" value="ECO:0000314"/>
    <property type="project" value="RGD"/>
</dbReference>
<dbReference type="GO" id="GO:0031851">
    <property type="term" value="F:kappa-type opioid receptor binding"/>
    <property type="evidence" value="ECO:0000353"/>
    <property type="project" value="RGD"/>
</dbReference>
<dbReference type="GO" id="GO:0004672">
    <property type="term" value="F:protein kinase activity"/>
    <property type="evidence" value="ECO:0000266"/>
    <property type="project" value="RGD"/>
</dbReference>
<dbReference type="GO" id="GO:0004674">
    <property type="term" value="F:protein serine/threonine kinase activity"/>
    <property type="evidence" value="ECO:0000266"/>
    <property type="project" value="RGD"/>
</dbReference>
<dbReference type="GO" id="GO:0097110">
    <property type="term" value="F:scaffold protein binding"/>
    <property type="evidence" value="ECO:0000353"/>
    <property type="project" value="RGD"/>
</dbReference>
<dbReference type="GO" id="GO:0031625">
    <property type="term" value="F:ubiquitin protein ligase binding"/>
    <property type="evidence" value="ECO:0000353"/>
    <property type="project" value="RGD"/>
</dbReference>
<dbReference type="GO" id="GO:0060048">
    <property type="term" value="P:cardiac muscle contraction"/>
    <property type="evidence" value="ECO:0000266"/>
    <property type="project" value="RGD"/>
</dbReference>
<dbReference type="GO" id="GO:0071870">
    <property type="term" value="P:cellular response to catecholamine stimulus"/>
    <property type="evidence" value="ECO:0000270"/>
    <property type="project" value="RGD"/>
</dbReference>
<dbReference type="GO" id="GO:1990869">
    <property type="term" value="P:cellular response to chemokine"/>
    <property type="evidence" value="ECO:0000314"/>
    <property type="project" value="RGD"/>
</dbReference>
<dbReference type="GO" id="GO:0071364">
    <property type="term" value="P:cellular response to epidermal growth factor stimulus"/>
    <property type="evidence" value="ECO:0000315"/>
    <property type="project" value="RGD"/>
</dbReference>
<dbReference type="GO" id="GO:0071333">
    <property type="term" value="P:cellular response to glucose stimulus"/>
    <property type="evidence" value="ECO:0000314"/>
    <property type="project" value="RGD"/>
</dbReference>
<dbReference type="GO" id="GO:1904628">
    <property type="term" value="P:cellular response to phorbol 13-acetate 12-myristate"/>
    <property type="evidence" value="ECO:0000270"/>
    <property type="project" value="RGD"/>
</dbReference>
<dbReference type="GO" id="GO:0072752">
    <property type="term" value="P:cellular response to rapamycin"/>
    <property type="evidence" value="ECO:0000270"/>
    <property type="project" value="RGD"/>
</dbReference>
<dbReference type="GO" id="GO:0002029">
    <property type="term" value="P:desensitization of G protein-coupled receptor signaling pathway"/>
    <property type="evidence" value="ECO:0000314"/>
    <property type="project" value="BHF-UCL"/>
</dbReference>
<dbReference type="GO" id="GO:0042699">
    <property type="term" value="P:follicle-stimulating hormone signaling pathway"/>
    <property type="evidence" value="ECO:0000314"/>
    <property type="project" value="RGD"/>
</dbReference>
<dbReference type="GO" id="GO:0007186">
    <property type="term" value="P:G protein-coupled receptor signaling pathway"/>
    <property type="evidence" value="ECO:0000314"/>
    <property type="project" value="RGD"/>
</dbReference>
<dbReference type="GO" id="GO:0007507">
    <property type="term" value="P:heart development"/>
    <property type="evidence" value="ECO:0000266"/>
    <property type="project" value="RGD"/>
</dbReference>
<dbReference type="GO" id="GO:0051457">
    <property type="term" value="P:maintenance of protein location in nucleus"/>
    <property type="evidence" value="ECO:0000315"/>
    <property type="project" value="RGD"/>
</dbReference>
<dbReference type="GO" id="GO:0106072">
    <property type="term" value="P:negative regulation of adenylate cyclase-activating G protein-coupled receptor signaling pathway"/>
    <property type="evidence" value="ECO:0000315"/>
    <property type="project" value="RGD"/>
</dbReference>
<dbReference type="GO" id="GO:0043066">
    <property type="term" value="P:negative regulation of apoptotic process"/>
    <property type="evidence" value="ECO:0000315"/>
    <property type="project" value="RGD"/>
</dbReference>
<dbReference type="GO" id="GO:2001234">
    <property type="term" value="P:negative regulation of apoptotic signaling pathway"/>
    <property type="evidence" value="ECO:0000315"/>
    <property type="project" value="RGD"/>
</dbReference>
<dbReference type="GO" id="GO:1900077">
    <property type="term" value="P:negative regulation of cellular response to insulin stimulus"/>
    <property type="evidence" value="ECO:0000315"/>
    <property type="project" value="RGD"/>
</dbReference>
<dbReference type="GO" id="GO:0046325">
    <property type="term" value="P:negative regulation of D-glucose import"/>
    <property type="evidence" value="ECO:0000315"/>
    <property type="project" value="RGD"/>
</dbReference>
<dbReference type="GO" id="GO:0045744">
    <property type="term" value="P:negative regulation of G protein-coupled receptor signaling pathway"/>
    <property type="evidence" value="ECO:0000314"/>
    <property type="project" value="RGD"/>
</dbReference>
<dbReference type="GO" id="GO:1901081">
    <property type="term" value="P:negative regulation of relaxation of smooth muscle"/>
    <property type="evidence" value="ECO:0000250"/>
    <property type="project" value="UniProtKB"/>
</dbReference>
<dbReference type="GO" id="GO:0045988">
    <property type="term" value="P:negative regulation of striated muscle contraction"/>
    <property type="evidence" value="ECO:0000266"/>
    <property type="project" value="RGD"/>
</dbReference>
<dbReference type="GO" id="GO:0003108">
    <property type="term" value="P:negative regulation of the force of heart contraction by chemical signal"/>
    <property type="evidence" value="ECO:0000266"/>
    <property type="project" value="RGD"/>
</dbReference>
<dbReference type="GO" id="GO:0048709">
    <property type="term" value="P:oligodendrocyte differentiation"/>
    <property type="evidence" value="ECO:0000315"/>
    <property type="project" value="RGD"/>
</dbReference>
<dbReference type="GO" id="GO:0033605">
    <property type="term" value="P:positive regulation of catecholamine secretion"/>
    <property type="evidence" value="ECO:0000314"/>
    <property type="project" value="BHF-UCL"/>
</dbReference>
<dbReference type="GO" id="GO:0070374">
    <property type="term" value="P:positive regulation of ERK1 and ERK2 cascade"/>
    <property type="evidence" value="ECO:0000315"/>
    <property type="project" value="RGD"/>
</dbReference>
<dbReference type="GO" id="GO:2000463">
    <property type="term" value="P:positive regulation of excitatory postsynaptic potential"/>
    <property type="evidence" value="ECO:0000315"/>
    <property type="project" value="RGD"/>
</dbReference>
<dbReference type="GO" id="GO:0048146">
    <property type="term" value="P:positive regulation of fibroblast proliferation"/>
    <property type="evidence" value="ECO:0000315"/>
    <property type="project" value="RGD"/>
</dbReference>
<dbReference type="GO" id="GO:0032755">
    <property type="term" value="P:positive regulation of interleukin-6 production"/>
    <property type="evidence" value="ECO:0000315"/>
    <property type="project" value="RGD"/>
</dbReference>
<dbReference type="GO" id="GO:0010661">
    <property type="term" value="P:positive regulation of muscle cell apoptotic process"/>
    <property type="evidence" value="ECO:0000315"/>
    <property type="project" value="RGD"/>
</dbReference>
<dbReference type="GO" id="GO:1904707">
    <property type="term" value="P:positive regulation of vascular associated smooth muscle cell proliferation"/>
    <property type="evidence" value="ECO:0000315"/>
    <property type="project" value="RGD"/>
</dbReference>
<dbReference type="GO" id="GO:0045907">
    <property type="term" value="P:positive regulation of vasoconstriction"/>
    <property type="evidence" value="ECO:0000315"/>
    <property type="project" value="RGD"/>
</dbReference>
<dbReference type="GO" id="GO:0031623">
    <property type="term" value="P:receptor internalization"/>
    <property type="evidence" value="ECO:0000266"/>
    <property type="project" value="RGD"/>
</dbReference>
<dbReference type="GO" id="GO:0032960">
    <property type="term" value="P:regulation of inositol trisphosphate biosynthetic process"/>
    <property type="evidence" value="ECO:0000315"/>
    <property type="project" value="RGD"/>
</dbReference>
<dbReference type="GO" id="GO:0002026">
    <property type="term" value="P:regulation of the force of heart contraction"/>
    <property type="evidence" value="ECO:0000266"/>
    <property type="project" value="RGD"/>
</dbReference>
<dbReference type="GO" id="GO:0061771">
    <property type="term" value="P:response to caloric restriction"/>
    <property type="evidence" value="ECO:0000270"/>
    <property type="project" value="RGD"/>
</dbReference>
<dbReference type="GO" id="GO:0042542">
    <property type="term" value="P:response to hydrogen peroxide"/>
    <property type="evidence" value="ECO:0000270"/>
    <property type="project" value="RGD"/>
</dbReference>
<dbReference type="GO" id="GO:0044321">
    <property type="term" value="P:response to leptin"/>
    <property type="evidence" value="ECO:0000270"/>
    <property type="project" value="RGD"/>
</dbReference>
<dbReference type="GO" id="GO:0014850">
    <property type="term" value="P:response to muscle activity"/>
    <property type="evidence" value="ECO:0000270"/>
    <property type="project" value="RGD"/>
</dbReference>
<dbReference type="GO" id="GO:0006979">
    <property type="term" value="P:response to oxidative stress"/>
    <property type="evidence" value="ECO:0000314"/>
    <property type="project" value="RGD"/>
</dbReference>
<dbReference type="GO" id="GO:0046718">
    <property type="term" value="P:symbiont entry into host cell"/>
    <property type="evidence" value="ECO:0000266"/>
    <property type="project" value="RGD"/>
</dbReference>
<dbReference type="GO" id="GO:0007217">
    <property type="term" value="P:tachykinin receptor signaling pathway"/>
    <property type="evidence" value="ECO:0000266"/>
    <property type="project" value="RGD"/>
</dbReference>
<dbReference type="GO" id="GO:0042311">
    <property type="term" value="P:vasodilation"/>
    <property type="evidence" value="ECO:0000315"/>
    <property type="project" value="RGD"/>
</dbReference>
<dbReference type="GO" id="GO:0019079">
    <property type="term" value="P:viral genome replication"/>
    <property type="evidence" value="ECO:0000266"/>
    <property type="project" value="RGD"/>
</dbReference>
<dbReference type="CDD" id="cd01240">
    <property type="entry name" value="PH_GRK2_subgroup"/>
    <property type="match status" value="1"/>
</dbReference>
<dbReference type="CDD" id="cd08747">
    <property type="entry name" value="RGS_GRK2_GRK3"/>
    <property type="match status" value="1"/>
</dbReference>
<dbReference type="CDD" id="cd14223">
    <property type="entry name" value="STKc_GRK2"/>
    <property type="match status" value="1"/>
</dbReference>
<dbReference type="FunFam" id="1.10.510.10:FF:000118">
    <property type="entry name" value="G protein-coupled receptor kinase"/>
    <property type="match status" value="1"/>
</dbReference>
<dbReference type="FunFam" id="2.30.29.30:FF:000084">
    <property type="entry name" value="G protein-coupled receptor kinase"/>
    <property type="match status" value="1"/>
</dbReference>
<dbReference type="FunFam" id="3.30.200.20:FF:000068">
    <property type="entry name" value="G protein-coupled receptor kinase"/>
    <property type="match status" value="1"/>
</dbReference>
<dbReference type="Gene3D" id="3.30.200.20">
    <property type="entry name" value="Phosphorylase Kinase, domain 1"/>
    <property type="match status" value="1"/>
</dbReference>
<dbReference type="Gene3D" id="2.30.29.30">
    <property type="entry name" value="Pleckstrin-homology domain (PH domain)/Phosphotyrosine-binding domain (PTB)"/>
    <property type="match status" value="1"/>
</dbReference>
<dbReference type="Gene3D" id="1.10.167.10">
    <property type="entry name" value="Regulator of G-protein Signalling 4, domain 2"/>
    <property type="match status" value="1"/>
</dbReference>
<dbReference type="Gene3D" id="1.10.510.10">
    <property type="entry name" value="Transferase(Phosphotransferase) domain 1"/>
    <property type="match status" value="1"/>
</dbReference>
<dbReference type="InterPro" id="IPR000961">
    <property type="entry name" value="AGC-kinase_C"/>
</dbReference>
<dbReference type="InterPro" id="IPR000239">
    <property type="entry name" value="GPCR_kinase"/>
</dbReference>
<dbReference type="InterPro" id="IPR011009">
    <property type="entry name" value="Kinase-like_dom_sf"/>
</dbReference>
<dbReference type="InterPro" id="IPR011993">
    <property type="entry name" value="PH-like_dom_sf"/>
</dbReference>
<dbReference type="InterPro" id="IPR001849">
    <property type="entry name" value="PH_domain"/>
</dbReference>
<dbReference type="InterPro" id="IPR000719">
    <property type="entry name" value="Prot_kinase_dom"/>
</dbReference>
<dbReference type="InterPro" id="IPR017441">
    <property type="entry name" value="Protein_kinase_ATP_BS"/>
</dbReference>
<dbReference type="InterPro" id="IPR016137">
    <property type="entry name" value="RGS"/>
</dbReference>
<dbReference type="InterPro" id="IPR036305">
    <property type="entry name" value="RGS_sf"/>
</dbReference>
<dbReference type="InterPro" id="IPR044926">
    <property type="entry name" value="RGS_subdomain_2"/>
</dbReference>
<dbReference type="InterPro" id="IPR008271">
    <property type="entry name" value="Ser/Thr_kinase_AS"/>
</dbReference>
<dbReference type="PANTHER" id="PTHR24355:SF22">
    <property type="entry name" value="BETA-ADRENERGIC RECEPTOR KINASE 1"/>
    <property type="match status" value="1"/>
</dbReference>
<dbReference type="PANTHER" id="PTHR24355">
    <property type="entry name" value="G PROTEIN-COUPLED RECEPTOR KINASE/RIBOSOMAL PROTEIN S6 KINASE"/>
    <property type="match status" value="1"/>
</dbReference>
<dbReference type="Pfam" id="PF00169">
    <property type="entry name" value="PH"/>
    <property type="match status" value="1"/>
</dbReference>
<dbReference type="Pfam" id="PF00069">
    <property type="entry name" value="Pkinase"/>
    <property type="match status" value="1"/>
</dbReference>
<dbReference type="Pfam" id="PF00615">
    <property type="entry name" value="RGS"/>
    <property type="match status" value="1"/>
</dbReference>
<dbReference type="PRINTS" id="PR00717">
    <property type="entry name" value="GPCRKINASE"/>
</dbReference>
<dbReference type="SMART" id="SM00233">
    <property type="entry name" value="PH"/>
    <property type="match status" value="1"/>
</dbReference>
<dbReference type="SMART" id="SM00315">
    <property type="entry name" value="RGS"/>
    <property type="match status" value="1"/>
</dbReference>
<dbReference type="SMART" id="SM00133">
    <property type="entry name" value="S_TK_X"/>
    <property type="match status" value="1"/>
</dbReference>
<dbReference type="SMART" id="SM00220">
    <property type="entry name" value="S_TKc"/>
    <property type="match status" value="1"/>
</dbReference>
<dbReference type="SUPFAM" id="SSF50729">
    <property type="entry name" value="PH domain-like"/>
    <property type="match status" value="1"/>
</dbReference>
<dbReference type="SUPFAM" id="SSF56112">
    <property type="entry name" value="Protein kinase-like (PK-like)"/>
    <property type="match status" value="1"/>
</dbReference>
<dbReference type="SUPFAM" id="SSF48097">
    <property type="entry name" value="Regulator of G-protein signaling, RGS"/>
    <property type="match status" value="1"/>
</dbReference>
<dbReference type="PROSITE" id="PS51285">
    <property type="entry name" value="AGC_KINASE_CTER"/>
    <property type="match status" value="1"/>
</dbReference>
<dbReference type="PROSITE" id="PS50003">
    <property type="entry name" value="PH_DOMAIN"/>
    <property type="match status" value="1"/>
</dbReference>
<dbReference type="PROSITE" id="PS00107">
    <property type="entry name" value="PROTEIN_KINASE_ATP"/>
    <property type="match status" value="1"/>
</dbReference>
<dbReference type="PROSITE" id="PS50011">
    <property type="entry name" value="PROTEIN_KINASE_DOM"/>
    <property type="match status" value="1"/>
</dbReference>
<dbReference type="PROSITE" id="PS00108">
    <property type="entry name" value="PROTEIN_KINASE_ST"/>
    <property type="match status" value="1"/>
</dbReference>
<dbReference type="PROSITE" id="PS50132">
    <property type="entry name" value="RGS"/>
    <property type="match status" value="1"/>
</dbReference>
<protein>
    <recommendedName>
        <fullName evidence="11">Beta-adrenergic receptor kinase 1</fullName>
        <shortName>Beta-ARK-1</shortName>
        <ecNumber evidence="9">2.7.11.15</ecNumber>
    </recommendedName>
    <alternativeName>
        <fullName evidence="12">G-protein-coupled receptor kinase 2</fullName>
    </alternativeName>
</protein>
<gene>
    <name evidence="12" type="primary">Grk2</name>
    <name type="synonym">Adrbk1</name>
</gene>
<accession>P26817</accession>
<reference key="1">
    <citation type="journal article" date="1992" name="J. Neurosci.">
        <title>The G-protein-coupled receptor kinases beta ARK1 and beta ARK2 are widely distributed at synapses in rat brain.</title>
        <authorList>
            <person name="Arriza J.L."/>
            <person name="Dawson T.M."/>
            <person name="Simerly R.B."/>
            <person name="Martin L.J."/>
            <person name="Caron M.G."/>
            <person name="Snyder S.H."/>
            <person name="Lefkowitz R.J."/>
        </authorList>
    </citation>
    <scope>NUCLEOTIDE SEQUENCE [MRNA]</scope>
    <scope>TISSUE SPECIFICITY</scope>
    <scope>SUBCELLULAR LOCATION</scope>
    <scope>CATALYTIC ACTIVITY</scope>
    <source>
        <tissue>Brain</tissue>
    </source>
</reference>
<reference key="2">
    <citation type="journal article" date="1992" name="Neurosci. Lett.">
        <title>Localization of mRNA for beta-adrenergic receptor kinase in the brain of adult rats.</title>
        <authorList>
            <person name="Owada Y."/>
            <person name="Watanabe M."/>
            <person name="Kondo H."/>
        </authorList>
    </citation>
    <scope>NUCLEOTIDE SEQUENCE [MRNA]</scope>
    <source>
        <tissue>Brain</tissue>
    </source>
</reference>
<reference key="3">
    <citation type="journal article" date="1998" name="Proc. Natl. Acad. Sci. U.S.A.">
        <title>Beta2-adrenergic receptor regulation by GIT1, a G protein-coupled receptor kinase-associated ADP ribosylation factor GTPase-activating protein.</title>
        <authorList>
            <person name="Premont R.T."/>
            <person name="Claing A."/>
            <person name="Vitale N."/>
            <person name="Freeman J.L.R."/>
            <person name="Pitcher J.A."/>
            <person name="Patton W.A."/>
            <person name="Moss J."/>
            <person name="Vaughan M."/>
            <person name="Lefkowitz R.J."/>
        </authorList>
    </citation>
    <scope>INTERACTION WITH GIT1</scope>
</reference>
<reference key="4">
    <citation type="journal article" date="2012" name="Nat. Commun.">
        <title>Quantitative maps of protein phosphorylation sites across 14 different rat organs and tissues.</title>
        <authorList>
            <person name="Lundby A."/>
            <person name="Secher A."/>
            <person name="Lage K."/>
            <person name="Nordsborg N.B."/>
            <person name="Dmytriyev A."/>
            <person name="Lundby C."/>
            <person name="Olsen J.V."/>
        </authorList>
    </citation>
    <scope>PHOSPHORYLATION [LARGE SCALE ANALYSIS] AT SER-670</scope>
    <scope>IDENTIFICATION BY MASS SPECTROMETRY [LARGE SCALE ANALYSIS]</scope>
</reference>
<proteinExistence type="evidence at protein level"/>
<name>ARBK1_RAT</name>
<keyword id="KW-0067">ATP-binding</keyword>
<keyword id="KW-1003">Cell membrane</keyword>
<keyword id="KW-0966">Cell projection</keyword>
<keyword id="KW-0963">Cytoplasm</keyword>
<keyword id="KW-0418">Kinase</keyword>
<keyword id="KW-0472">Membrane</keyword>
<keyword id="KW-0547">Nucleotide-binding</keyword>
<keyword id="KW-0597">Phosphoprotein</keyword>
<keyword id="KW-1185">Reference proteome</keyword>
<keyword id="KW-0723">Serine/threonine-protein kinase</keyword>
<keyword id="KW-0770">Synapse</keyword>
<keyword id="KW-0808">Transferase</keyword>
<evidence type="ECO:0000250" key="1">
    <source>
        <dbReference type="UniProtKB" id="P21146"/>
    </source>
</evidence>
<evidence type="ECO:0000250" key="2">
    <source>
        <dbReference type="UniProtKB" id="P25098"/>
    </source>
</evidence>
<evidence type="ECO:0000250" key="3">
    <source>
        <dbReference type="UniProtKB" id="Q99MK8"/>
    </source>
</evidence>
<evidence type="ECO:0000255" key="4">
    <source>
        <dbReference type="PROSITE-ProRule" id="PRU00145"/>
    </source>
</evidence>
<evidence type="ECO:0000255" key="5">
    <source>
        <dbReference type="PROSITE-ProRule" id="PRU00159"/>
    </source>
</evidence>
<evidence type="ECO:0000255" key="6">
    <source>
        <dbReference type="PROSITE-ProRule" id="PRU00171"/>
    </source>
</evidence>
<evidence type="ECO:0000255" key="7">
    <source>
        <dbReference type="PROSITE-ProRule" id="PRU00618"/>
    </source>
</evidence>
<evidence type="ECO:0000255" key="8">
    <source>
        <dbReference type="PROSITE-ProRule" id="PRU10027"/>
    </source>
</evidence>
<evidence type="ECO:0000269" key="9">
    <source>
    </source>
</evidence>
<evidence type="ECO:0000269" key="10">
    <source>
    </source>
</evidence>
<evidence type="ECO:0000305" key="11"/>
<evidence type="ECO:0000312" key="12">
    <source>
        <dbReference type="RGD" id="2062"/>
    </source>
</evidence>
<evidence type="ECO:0007744" key="13">
    <source>
    </source>
</evidence>
<comment type="function">
    <text evidence="1 2 3 9">Specifically phosphorylates the agonist-occupied form of the beta-adrenergic and closely related receptors, probably inducing a desensitization of them (PubMed:1403099). Key regulator of LPAR1 signaling (By similarity). Competes with RALA for binding to LPAR1 thus affecting the signaling properties of the receptor (By similarity). Desensitizes LPAR1 and LPAR2 in a phosphorylation-independent manner (By similarity). Positively regulates ciliary smoothened (SMO)-dependent Hedgehog (Hh) signaling pathway by facilitating the trafficking of SMO into the cilium and the stimulation of SMO activity (By similarity). Inhibits relaxation of airway smooth muscle in response to blue light (By similarity).</text>
</comment>
<comment type="catalytic activity">
    <reaction evidence="9">
        <text>[beta-adrenergic receptor] + ATP = [beta-adrenergic receptor]-phosphate + ADP + H(+)</text>
        <dbReference type="Rhea" id="RHEA:19429"/>
        <dbReference type="Rhea" id="RHEA-COMP:11222"/>
        <dbReference type="Rhea" id="RHEA-COMP:11223"/>
        <dbReference type="ChEBI" id="CHEBI:15378"/>
        <dbReference type="ChEBI" id="CHEBI:30616"/>
        <dbReference type="ChEBI" id="CHEBI:43176"/>
        <dbReference type="ChEBI" id="CHEBI:68546"/>
        <dbReference type="ChEBI" id="CHEBI:456216"/>
        <dbReference type="EC" id="2.7.11.15"/>
    </reaction>
    <physiologicalReaction direction="left-to-right" evidence="9">
        <dbReference type="Rhea" id="RHEA:19430"/>
    </physiologicalReaction>
</comment>
<comment type="activity regulation">
    <text evidence="1">In contrast to other AGC family kinases, the catalytic activity is solely regulated by the binding of substrates and ligands, not by phosphorylation of the kinase domain.</text>
</comment>
<comment type="subunit">
    <text evidence="1 2 10">Interacts with the heterodimer formed by GNB1 and GNG2 (By similarity). Interacts with GIT1 (PubMed:9826657). Interacts with, and phosphorylates chemokine-stimulated CCR5 (By similarity). Interacts with ARRB1 (By similarity). Interacts with LPAR1 and LPAR2 (By similarity). Interacts with RALA in response to LPAR1 activation (By similarity). ADRBK1 and RALA mutually inhibit each other's binding to LPAR1 (By similarity). Interacts with ADRB2 (By similarity).</text>
</comment>
<comment type="subcellular location">
    <subcellularLocation>
        <location evidence="9">Cytoplasm</location>
    </subcellularLocation>
    <subcellularLocation>
        <location evidence="1">Cell membrane</location>
    </subcellularLocation>
    <subcellularLocation>
        <location evidence="9">Postsynapse</location>
    </subcellularLocation>
    <subcellularLocation>
        <location evidence="9">Presynapse</location>
    </subcellularLocation>
</comment>
<comment type="tissue specificity">
    <text evidence="9">Expressed at low levels in brain cortex, hippocampus, striatum, hypothalamus, cerebellum and brainstem (at protein level).</text>
</comment>
<comment type="domain">
    <text evidence="1">The PH domain binds anionic phospholipids and helps recruiting ADRBK1 from the cytoplasm to plasma membrane close to activated receptors. It mediates binding to G protein beta and gamma subunits, competing with G-alpha subunits and other G-betagamma effectors.</text>
</comment>
<comment type="similarity">
    <text evidence="11">Belongs to the protein kinase superfamily. AGC Ser/Thr protein kinase family. GPRK subfamily.</text>
</comment>
<feature type="chain" id="PRO_0000085630" description="Beta-adrenergic receptor kinase 1">
    <location>
        <begin position="1"/>
        <end position="689"/>
    </location>
</feature>
<feature type="domain" description="RGS" evidence="6">
    <location>
        <begin position="54"/>
        <end position="175"/>
    </location>
</feature>
<feature type="domain" description="Protein kinase" evidence="5">
    <location>
        <begin position="191"/>
        <end position="453"/>
    </location>
</feature>
<feature type="domain" description="AGC-kinase C-terminal" evidence="7">
    <location>
        <begin position="454"/>
        <end position="521"/>
    </location>
</feature>
<feature type="domain" description="PH" evidence="4">
    <location>
        <begin position="558"/>
        <end position="652"/>
    </location>
</feature>
<feature type="region of interest" description="N-terminal">
    <location>
        <begin position="1"/>
        <end position="190"/>
    </location>
</feature>
<feature type="active site" description="Proton acceptor" evidence="5 8">
    <location>
        <position position="317"/>
    </location>
</feature>
<feature type="binding site" evidence="5">
    <location>
        <begin position="197"/>
        <end position="205"/>
    </location>
    <ligand>
        <name>ATP</name>
        <dbReference type="ChEBI" id="CHEBI:30616"/>
    </ligand>
</feature>
<feature type="binding site" evidence="5">
    <location>
        <position position="220"/>
    </location>
    <ligand>
        <name>ATP</name>
        <dbReference type="ChEBI" id="CHEBI:30616"/>
    </ligand>
</feature>
<feature type="site" description="Required for receptor phosphorylation" evidence="2">
    <location>
        <position position="3"/>
    </location>
</feature>
<feature type="site" description="Required for receptor phosphorylation" evidence="2">
    <location>
        <position position="4"/>
    </location>
</feature>
<feature type="site" description="Required for receptor phosphorylation" evidence="2">
    <location>
        <position position="10"/>
    </location>
</feature>
<feature type="modified residue" description="Phosphoserine" evidence="13">
    <location>
        <position position="670"/>
    </location>
</feature>
<feature type="sequence conflict" description="In Ref. 2; AAB24228." evidence="11" ref="2">
    <original>PA</original>
    <variation>RR</variation>
    <location>
        <begin position="24"/>
        <end position="25"/>
    </location>
</feature>
<feature type="sequence conflict" description="In Ref. 2; AAB24228." evidence="11" ref="2">
    <original>Y</original>
    <variation>N</variation>
    <location>
        <position position="46"/>
    </location>
</feature>
<feature type="sequence conflict" description="In Ref. 2; AAB24228." evidence="11" ref="2">
    <original>Y</original>
    <variation>C</variation>
    <location>
        <position position="72"/>
    </location>
</feature>
<feature type="sequence conflict" description="In Ref. 2; AAB24228." evidence="11" ref="2">
    <original>E</original>
    <variation>K</variation>
    <location>
        <position position="90"/>
    </location>
</feature>
<feature type="sequence conflict" description="In Ref. 2; AAB24228." evidence="11" ref="2">
    <original>G</original>
    <variation>V</variation>
    <location>
        <position position="249"/>
    </location>
</feature>
<feature type="sequence conflict" description="In Ref. 2; AAB24228." evidence="11" ref="2">
    <original>I</original>
    <variation>S</variation>
    <location>
        <position position="270"/>
    </location>
</feature>
<feature type="sequence conflict" description="In Ref. 2; AAB24228." evidence="11" ref="2">
    <original>F</original>
    <variation>Y</variation>
    <location>
        <position position="296"/>
    </location>
</feature>
<feature type="sequence conflict" description="In Ref. 2; AAB24228." evidence="11" ref="2">
    <original>I</original>
    <variation>V</variation>
    <location>
        <position position="447"/>
    </location>
</feature>
<feature type="sequence conflict" description="In Ref. 2; AAB24228." evidence="11" ref="2">
    <original>D</original>
    <variation>G</variation>
    <location>
        <position position="594"/>
    </location>
</feature>
<organism>
    <name type="scientific">Rattus norvegicus</name>
    <name type="common">Rat</name>
    <dbReference type="NCBI Taxonomy" id="10116"/>
    <lineage>
        <taxon>Eukaryota</taxon>
        <taxon>Metazoa</taxon>
        <taxon>Chordata</taxon>
        <taxon>Craniata</taxon>
        <taxon>Vertebrata</taxon>
        <taxon>Euteleostomi</taxon>
        <taxon>Mammalia</taxon>
        <taxon>Eutheria</taxon>
        <taxon>Euarchontoglires</taxon>
        <taxon>Glires</taxon>
        <taxon>Rodentia</taxon>
        <taxon>Myomorpha</taxon>
        <taxon>Muroidea</taxon>
        <taxon>Muridae</taxon>
        <taxon>Murinae</taxon>
        <taxon>Rattus</taxon>
    </lineage>
</organism>